<feature type="chain" id="PRO_0000074886" description="Sensor protein SrrB">
    <location>
        <begin position="1"/>
        <end position="583"/>
    </location>
</feature>
<feature type="topological domain" description="Cytoplasmic" evidence="3">
    <location>
        <begin position="1"/>
        <end position="11"/>
    </location>
</feature>
<feature type="transmembrane region" description="Helical" evidence="3">
    <location>
        <begin position="12"/>
        <end position="32"/>
    </location>
</feature>
<feature type="topological domain" description="Extracellular" evidence="3">
    <location>
        <begin position="33"/>
        <end position="174"/>
    </location>
</feature>
<feature type="transmembrane region" description="Helical" evidence="3">
    <location>
        <begin position="175"/>
        <end position="195"/>
    </location>
</feature>
<feature type="topological domain" description="Cytoplasmic" evidence="3">
    <location>
        <begin position="196"/>
        <end position="583"/>
    </location>
</feature>
<feature type="domain" description="HAMP" evidence="4">
    <location>
        <begin position="197"/>
        <end position="249"/>
    </location>
</feature>
<feature type="domain" description="Histidine kinase" evidence="5">
    <location>
        <begin position="366"/>
        <end position="583"/>
    </location>
</feature>
<feature type="modified residue" description="Phosphohistidine; by autocatalysis" evidence="5">
    <location>
        <position position="369"/>
    </location>
</feature>
<gene>
    <name type="primary">srrB</name>
    <name type="ordered locus">SAS1431</name>
</gene>
<protein>
    <recommendedName>
        <fullName>Sensor protein SrrB</fullName>
        <ecNumber>2.7.13.3</ecNumber>
    </recommendedName>
    <alternativeName>
        <fullName>Staphylococcal respiratory response protein B</fullName>
    </alternativeName>
</protein>
<comment type="function">
    <text evidence="2">Member of the two-component regulatory system SrrA/SrrB, which is involved in the global regulation of staphylococcal virulence factors in response to environmental oxygen levels as well as biofilm formation. Also plays an essential role in host-derived nitric oxide resistance by regulating hmp/flavohemoglobin, an enzyme that detoxifies nitric oxide by converting it to nitrate. Functions as a sensor protein kinase which is autophosphorylated at a histidine residue and transfers its phosphate group to SrrA. In turn, SrrA binds to the upstream promoter regions of the target genes to positively and negatively regulate their expression.</text>
</comment>
<comment type="catalytic activity">
    <reaction>
        <text>ATP + protein L-histidine = ADP + protein N-phospho-L-histidine.</text>
        <dbReference type="EC" id="2.7.13.3"/>
    </reaction>
</comment>
<comment type="subcellular location">
    <subcellularLocation>
        <location evidence="1">Cell membrane</location>
        <topology evidence="1">Multi-pass membrane protein</topology>
    </subcellularLocation>
</comment>
<comment type="sequence caution" evidence="6">
    <conflict type="erroneous initiation">
        <sequence resource="EMBL-CDS" id="CAG43208"/>
    </conflict>
</comment>
<reference key="1">
    <citation type="journal article" date="2004" name="Proc. Natl. Acad. Sci. U.S.A.">
        <title>Complete genomes of two clinical Staphylococcus aureus strains: evidence for the rapid evolution of virulence and drug resistance.</title>
        <authorList>
            <person name="Holden M.T.G."/>
            <person name="Feil E.J."/>
            <person name="Lindsay J.A."/>
            <person name="Peacock S.J."/>
            <person name="Day N.P.J."/>
            <person name="Enright M.C."/>
            <person name="Foster T.J."/>
            <person name="Moore C.E."/>
            <person name="Hurst L."/>
            <person name="Atkin R."/>
            <person name="Barron A."/>
            <person name="Bason N."/>
            <person name="Bentley S.D."/>
            <person name="Chillingworth C."/>
            <person name="Chillingworth T."/>
            <person name="Churcher C."/>
            <person name="Clark L."/>
            <person name="Corton C."/>
            <person name="Cronin A."/>
            <person name="Doggett J."/>
            <person name="Dowd L."/>
            <person name="Feltwell T."/>
            <person name="Hance Z."/>
            <person name="Harris B."/>
            <person name="Hauser H."/>
            <person name="Holroyd S."/>
            <person name="Jagels K."/>
            <person name="James K.D."/>
            <person name="Lennard N."/>
            <person name="Line A."/>
            <person name="Mayes R."/>
            <person name="Moule S."/>
            <person name="Mungall K."/>
            <person name="Ormond D."/>
            <person name="Quail M.A."/>
            <person name="Rabbinowitsch E."/>
            <person name="Rutherford K.M."/>
            <person name="Sanders M."/>
            <person name="Sharp S."/>
            <person name="Simmonds M."/>
            <person name="Stevens K."/>
            <person name="Whitehead S."/>
            <person name="Barrell B.G."/>
            <person name="Spratt B.G."/>
            <person name="Parkhill J."/>
        </authorList>
    </citation>
    <scope>NUCLEOTIDE SEQUENCE [LARGE SCALE GENOMIC DNA]</scope>
    <source>
        <strain>MSSA476</strain>
    </source>
</reference>
<evidence type="ECO:0000250" key="1"/>
<evidence type="ECO:0000250" key="2">
    <source>
        <dbReference type="UniProtKB" id="Q5HFT1"/>
    </source>
</evidence>
<evidence type="ECO:0000255" key="3"/>
<evidence type="ECO:0000255" key="4">
    <source>
        <dbReference type="PROSITE-ProRule" id="PRU00102"/>
    </source>
</evidence>
<evidence type="ECO:0000255" key="5">
    <source>
        <dbReference type="PROSITE-ProRule" id="PRU00107"/>
    </source>
</evidence>
<evidence type="ECO:0000305" key="6"/>
<keyword id="KW-0067">ATP-binding</keyword>
<keyword id="KW-1003">Cell membrane</keyword>
<keyword id="KW-0418">Kinase</keyword>
<keyword id="KW-0472">Membrane</keyword>
<keyword id="KW-0547">Nucleotide-binding</keyword>
<keyword id="KW-0597">Phosphoprotein</keyword>
<keyword id="KW-0808">Transferase</keyword>
<keyword id="KW-0812">Transmembrane</keyword>
<keyword id="KW-1133">Transmembrane helix</keyword>
<keyword id="KW-0902">Two-component regulatory system</keyword>
<sequence length="583" mass="66076">MMSRLNSVVIKLWLTIILIVTTVLILLSIALITFMQYYFTQETENAIREDARRISSLVEQSHNKEEAIKYSQTLIENPGGLMIINNKHRQSTASLSNIKKQMLNEVVNNDHFDDVFDKGKSVTRNVTIKEKGSSQTYILLGYPTKAQKNSHSKYSGVFIYKDLKSIEDTNNAITIITIITAVIFLTITTVFAFFLSSRITKPLRRLRDQATRVSEGDYSYKPSVTTKDEIGQLSQAFNQMSTEIEEHVDALSTSKNIRDSLINSMVEGVLGINESRQIILSNKMANDIMDNIDEDAKAFLLRQIEDTFKSKQTEMRDLEMNARFFVVTTSYIDKIEQGGKSGVVVTVRDMTNEHNLDQMKKDFIANVSHELRTPISLLQGYTESIVDGIVTEPDEIKESLAIVLDESKRLNRLVNELLNVARMDAEGLSVNKEVQPIAALLDKMKIKYRQQADDLGLNMTFNYCKKRVWSYDMDRMDQVLTNLIDNASRYTKPGDEIAITCDENESEDILYIKDTGTGIAPEHLQQVFDRFYKVDAARTRGKQGTGLGLFICKMIIEEHGGSIDVKSELGKGTTFIIKLPKPE</sequence>
<accession>Q6G973</accession>
<name>SRRB_STAAS</name>
<dbReference type="EC" id="2.7.13.3"/>
<dbReference type="EMBL" id="BX571857">
    <property type="protein sequence ID" value="CAG43208.1"/>
    <property type="status" value="ALT_INIT"/>
    <property type="molecule type" value="Genomic_DNA"/>
</dbReference>
<dbReference type="RefSeq" id="WP_000987769.1">
    <property type="nucleotide sequence ID" value="NC_002953.3"/>
</dbReference>
<dbReference type="SMR" id="Q6G973"/>
<dbReference type="KEGG" id="sas:SAS1431"/>
<dbReference type="HOGENOM" id="CLU_000445_89_2_9"/>
<dbReference type="GO" id="GO:0005886">
    <property type="term" value="C:plasma membrane"/>
    <property type="evidence" value="ECO:0007669"/>
    <property type="project" value="UniProtKB-SubCell"/>
</dbReference>
<dbReference type="GO" id="GO:0005524">
    <property type="term" value="F:ATP binding"/>
    <property type="evidence" value="ECO:0007669"/>
    <property type="project" value="UniProtKB-KW"/>
</dbReference>
<dbReference type="GO" id="GO:0000156">
    <property type="term" value="F:phosphorelay response regulator activity"/>
    <property type="evidence" value="ECO:0007669"/>
    <property type="project" value="TreeGrafter"/>
</dbReference>
<dbReference type="GO" id="GO:0000155">
    <property type="term" value="F:phosphorelay sensor kinase activity"/>
    <property type="evidence" value="ECO:0007669"/>
    <property type="project" value="InterPro"/>
</dbReference>
<dbReference type="GO" id="GO:0030295">
    <property type="term" value="F:protein kinase activator activity"/>
    <property type="evidence" value="ECO:0007669"/>
    <property type="project" value="TreeGrafter"/>
</dbReference>
<dbReference type="GO" id="GO:0007234">
    <property type="term" value="P:osmosensory signaling via phosphorelay pathway"/>
    <property type="evidence" value="ECO:0007669"/>
    <property type="project" value="TreeGrafter"/>
</dbReference>
<dbReference type="CDD" id="cd06225">
    <property type="entry name" value="HAMP"/>
    <property type="match status" value="1"/>
</dbReference>
<dbReference type="CDD" id="cd00075">
    <property type="entry name" value="HATPase"/>
    <property type="match status" value="1"/>
</dbReference>
<dbReference type="CDD" id="cd00082">
    <property type="entry name" value="HisKA"/>
    <property type="match status" value="1"/>
</dbReference>
<dbReference type="FunFam" id="3.30.565.10:FF:000006">
    <property type="entry name" value="Sensor histidine kinase WalK"/>
    <property type="match status" value="1"/>
</dbReference>
<dbReference type="FunFam" id="1.10.287.130:FF:000001">
    <property type="entry name" value="Two-component sensor histidine kinase"/>
    <property type="match status" value="1"/>
</dbReference>
<dbReference type="Gene3D" id="1.10.287.130">
    <property type="match status" value="1"/>
</dbReference>
<dbReference type="Gene3D" id="6.10.340.10">
    <property type="match status" value="1"/>
</dbReference>
<dbReference type="Gene3D" id="3.30.565.10">
    <property type="entry name" value="Histidine kinase-like ATPase, C-terminal domain"/>
    <property type="match status" value="1"/>
</dbReference>
<dbReference type="InterPro" id="IPR003660">
    <property type="entry name" value="HAMP_dom"/>
</dbReference>
<dbReference type="InterPro" id="IPR036890">
    <property type="entry name" value="HATPase_C_sf"/>
</dbReference>
<dbReference type="InterPro" id="IPR005467">
    <property type="entry name" value="His_kinase_dom"/>
</dbReference>
<dbReference type="InterPro" id="IPR003661">
    <property type="entry name" value="HisK_dim/P_dom"/>
</dbReference>
<dbReference type="InterPro" id="IPR036097">
    <property type="entry name" value="HisK_dim/P_sf"/>
</dbReference>
<dbReference type="InterPro" id="IPR041328">
    <property type="entry name" value="HisK_sensor"/>
</dbReference>
<dbReference type="InterPro" id="IPR052545">
    <property type="entry name" value="Light-responsive_reg"/>
</dbReference>
<dbReference type="InterPro" id="IPR004358">
    <property type="entry name" value="Sig_transdc_His_kin-like_C"/>
</dbReference>
<dbReference type="PANTHER" id="PTHR42878:SF3">
    <property type="entry name" value="HISTIDINE PROTEIN KINASE SAES"/>
    <property type="match status" value="1"/>
</dbReference>
<dbReference type="PANTHER" id="PTHR42878">
    <property type="entry name" value="TWO-COMPONENT HISTIDINE KINASE"/>
    <property type="match status" value="1"/>
</dbReference>
<dbReference type="Pfam" id="PF00672">
    <property type="entry name" value="HAMP"/>
    <property type="match status" value="1"/>
</dbReference>
<dbReference type="Pfam" id="PF02518">
    <property type="entry name" value="HATPase_c"/>
    <property type="match status" value="1"/>
</dbReference>
<dbReference type="Pfam" id="PF18698">
    <property type="entry name" value="HisK_sensor"/>
    <property type="match status" value="1"/>
</dbReference>
<dbReference type="Pfam" id="PF00512">
    <property type="entry name" value="HisKA"/>
    <property type="match status" value="1"/>
</dbReference>
<dbReference type="PRINTS" id="PR00344">
    <property type="entry name" value="BCTRLSENSOR"/>
</dbReference>
<dbReference type="SMART" id="SM00304">
    <property type="entry name" value="HAMP"/>
    <property type="match status" value="1"/>
</dbReference>
<dbReference type="SMART" id="SM00387">
    <property type="entry name" value="HATPase_c"/>
    <property type="match status" value="1"/>
</dbReference>
<dbReference type="SMART" id="SM00388">
    <property type="entry name" value="HisKA"/>
    <property type="match status" value="1"/>
</dbReference>
<dbReference type="SUPFAM" id="SSF55874">
    <property type="entry name" value="ATPase domain of HSP90 chaperone/DNA topoisomerase II/histidine kinase"/>
    <property type="match status" value="1"/>
</dbReference>
<dbReference type="SUPFAM" id="SSF158472">
    <property type="entry name" value="HAMP domain-like"/>
    <property type="match status" value="1"/>
</dbReference>
<dbReference type="SUPFAM" id="SSF47384">
    <property type="entry name" value="Homodimeric domain of signal transducing histidine kinase"/>
    <property type="match status" value="1"/>
</dbReference>
<dbReference type="PROSITE" id="PS50885">
    <property type="entry name" value="HAMP"/>
    <property type="match status" value="1"/>
</dbReference>
<dbReference type="PROSITE" id="PS50109">
    <property type="entry name" value="HIS_KIN"/>
    <property type="match status" value="1"/>
</dbReference>
<proteinExistence type="inferred from homology"/>
<organism>
    <name type="scientific">Staphylococcus aureus (strain MSSA476)</name>
    <dbReference type="NCBI Taxonomy" id="282459"/>
    <lineage>
        <taxon>Bacteria</taxon>
        <taxon>Bacillati</taxon>
        <taxon>Bacillota</taxon>
        <taxon>Bacilli</taxon>
        <taxon>Bacillales</taxon>
        <taxon>Staphylococcaceae</taxon>
        <taxon>Staphylococcus</taxon>
    </lineage>
</organism>